<accession>A0A9Y1LNE1</accession>
<keyword id="KW-0413">Isomerase</keyword>
<keyword id="KW-0444">Lipid biosynthesis</keyword>
<keyword id="KW-0443">Lipid metabolism</keyword>
<keyword id="KW-0472">Membrane</keyword>
<keyword id="KW-0752">Steroid biosynthesis</keyword>
<keyword id="KW-0753">Steroid metabolism</keyword>
<keyword id="KW-0756">Sterol biosynthesis</keyword>
<keyword id="KW-1207">Sterol metabolism</keyword>
<keyword id="KW-0812">Transmembrane</keyword>
<keyword id="KW-1133">Transmembrane helix</keyword>
<evidence type="ECO:0000255" key="1"/>
<evidence type="ECO:0000255" key="2">
    <source>
        <dbReference type="PROSITE-ProRule" id="PRU01087"/>
    </source>
</evidence>
<evidence type="ECO:0000269" key="3">
    <source>
    </source>
</evidence>
<evidence type="ECO:0000303" key="4">
    <source>
    </source>
</evidence>
<evidence type="ECO:0000305" key="5"/>
<feature type="chain" id="PRO_0000461376" description="Isomeliandiol synthase ISM1">
    <location>
        <begin position="1"/>
        <end position="210"/>
    </location>
</feature>
<feature type="transmembrane region" description="Helical" evidence="1">
    <location>
        <begin position="17"/>
        <end position="37"/>
    </location>
</feature>
<feature type="transmembrane region" description="Helical" evidence="1">
    <location>
        <begin position="50"/>
        <end position="70"/>
    </location>
</feature>
<feature type="transmembrane region" description="Helical" evidence="1">
    <location>
        <begin position="107"/>
        <end position="127"/>
    </location>
</feature>
<feature type="transmembrane region" description="Helical" evidence="1">
    <location>
        <begin position="135"/>
        <end position="155"/>
    </location>
</feature>
<feature type="transmembrane region" description="Helical" evidence="1">
    <location>
        <begin position="172"/>
        <end position="192"/>
    </location>
</feature>
<feature type="domain" description="EXPERA" evidence="2">
    <location>
        <begin position="46"/>
        <end position="188"/>
    </location>
</feature>
<sequence>MSNSYMPIDYVLNFSTFTLHAWNGLSLFLIISGTWFISGMCTKAKGDRLLLCWWALTGLIHIIQEGYFVFTPDLFKDKSPNFIAELWIEYNKGDSRYVSRHTSVLAIEGMAAVVMGPLSLLVVYAIVKAKSYSYILQFGVSIAQLYGACLYFLTAFLEGDNFASSPYYYYAYYVGQSSIWIIVPSLIAINFWRKMNGICQLHDKKKAKVC</sequence>
<reference key="1">
    <citation type="journal article" date="2023" name="J. Am. Chem. Soc.">
        <title>Post-cyclization skeletal rearrangements in plant triterpenoid biosynthesis by a pair of branchpoint isomerases.</title>
        <authorList>
            <person name="Chuang L."/>
            <person name="Liu S."/>
            <person name="Franke J."/>
        </authorList>
    </citation>
    <scope>NUCLEOTIDE SEQUENCE [MRNA]</scope>
    <scope>FUNCTION</scope>
    <scope>CATALYTIC ACTIVITY</scope>
    <scope>PATHWAY</scope>
</reference>
<protein>
    <recommendedName>
        <fullName evidence="4">Isomeliandiol synthase ISM1</fullName>
        <ecNumber evidence="3">5.3.3.-</ecNumber>
    </recommendedName>
    <alternativeName>
        <fullName evidence="4">Isomerase 1</fullName>
        <shortName evidence="4">AaISM1</shortName>
    </alternativeName>
</protein>
<organism>
    <name type="scientific">Ailanthus altissima</name>
    <name type="common">Tree-of-heaven</name>
    <name type="synonym">Toxicodendron altissimum</name>
    <dbReference type="NCBI Taxonomy" id="2768810"/>
    <lineage>
        <taxon>Eukaryota</taxon>
        <taxon>Viridiplantae</taxon>
        <taxon>Streptophyta</taxon>
        <taxon>Embryophyta</taxon>
        <taxon>Tracheophyta</taxon>
        <taxon>Spermatophyta</taxon>
        <taxon>Magnoliopsida</taxon>
        <taxon>eudicotyledons</taxon>
        <taxon>Gunneridae</taxon>
        <taxon>Pentapetalae</taxon>
        <taxon>rosids</taxon>
        <taxon>malvids</taxon>
        <taxon>Sapindales</taxon>
        <taxon>Simaroubaceae</taxon>
        <taxon>Ailanthus</taxon>
    </lineage>
</organism>
<comment type="function">
    <text evidence="3">Isomerase involved in the biosynthesis of limonoids and quassinoids triterpene natural products such as ailanthone, chaparrinone, glaucarubinone and amarolide, allelopathic degraded triterpene lactones inhibiting the growth of other plants, and possessing antimalarial, antifeedant, insecticidal, anti-inflammatory and anticancer activities (PubMed:36821810). Catalyzes the conversion of 7,8-epoxymelianol to isomeliandiol via skeletal rearrangements (PubMed:36821810).</text>
</comment>
<comment type="catalytic activity">
    <reaction evidence="3">
        <text>7,8-epoxymelianol = isomeliandiol</text>
        <dbReference type="Rhea" id="RHEA:80295"/>
        <dbReference type="ChEBI" id="CHEBI:231452"/>
        <dbReference type="ChEBI" id="CHEBI:231453"/>
    </reaction>
    <physiologicalReaction direction="left-to-right" evidence="3">
        <dbReference type="Rhea" id="RHEA:80296"/>
    </physiologicalReaction>
</comment>
<comment type="pathway">
    <text evidence="3">Secondary metabolite biosynthesis; terpenoid biosynthesis.</text>
</comment>
<comment type="subcellular location">
    <subcellularLocation>
        <location evidence="1">Membrane</location>
        <topology evidence="1">Multi-pass membrane protein</topology>
    </subcellularLocation>
</comment>
<comment type="similarity">
    <text evidence="5">Belongs to the EBP family.</text>
</comment>
<gene>
    <name evidence="4" type="primary">ISM1</name>
</gene>
<dbReference type="EC" id="5.3.3.-" evidence="3"/>
<dbReference type="EMBL" id="ON942228">
    <property type="protein sequence ID" value="WET51927.1"/>
    <property type="molecule type" value="mRNA"/>
</dbReference>
<dbReference type="SMR" id="A0A9Y1LNE1"/>
<dbReference type="UniPathway" id="UPA00213"/>
<dbReference type="GO" id="GO:0005783">
    <property type="term" value="C:endoplasmic reticulum"/>
    <property type="evidence" value="ECO:0007669"/>
    <property type="project" value="TreeGrafter"/>
</dbReference>
<dbReference type="GO" id="GO:0016020">
    <property type="term" value="C:membrane"/>
    <property type="evidence" value="ECO:0007669"/>
    <property type="project" value="UniProtKB-SubCell"/>
</dbReference>
<dbReference type="GO" id="GO:0000247">
    <property type="term" value="F:C-8 sterol isomerase activity"/>
    <property type="evidence" value="ECO:0007669"/>
    <property type="project" value="TreeGrafter"/>
</dbReference>
<dbReference type="GO" id="GO:0047750">
    <property type="term" value="F:cholestenol delta-isomerase activity"/>
    <property type="evidence" value="ECO:0007669"/>
    <property type="project" value="InterPro"/>
</dbReference>
<dbReference type="GO" id="GO:0004769">
    <property type="term" value="F:steroid Delta-isomerase activity"/>
    <property type="evidence" value="ECO:0007669"/>
    <property type="project" value="TreeGrafter"/>
</dbReference>
<dbReference type="GO" id="GO:0016126">
    <property type="term" value="P:sterol biosynthetic process"/>
    <property type="evidence" value="ECO:0007669"/>
    <property type="project" value="UniProtKB-KW"/>
</dbReference>
<dbReference type="InterPro" id="IPR007905">
    <property type="entry name" value="EBP"/>
</dbReference>
<dbReference type="InterPro" id="IPR033118">
    <property type="entry name" value="EXPERA"/>
</dbReference>
<dbReference type="PANTHER" id="PTHR14207:SF0">
    <property type="entry name" value="3-BETA-HYDROXYSTEROID-DELTA(8),DELTA(7)-ISOMERASE"/>
    <property type="match status" value="1"/>
</dbReference>
<dbReference type="PANTHER" id="PTHR14207">
    <property type="entry name" value="STEROL ISOMERASE"/>
    <property type="match status" value="1"/>
</dbReference>
<dbReference type="Pfam" id="PF05241">
    <property type="entry name" value="EBP"/>
    <property type="match status" value="1"/>
</dbReference>
<dbReference type="PROSITE" id="PS51751">
    <property type="entry name" value="EXPERA"/>
    <property type="match status" value="1"/>
</dbReference>
<name>ISM1_AILAL</name>
<proteinExistence type="evidence at protein level"/>